<comment type="function">
    <text evidence="3">Involved in the glyoxylate assimilation cycle used to regenerate acetyl-CoA and produce pyruvate as universal precursor for biosynthesis. Catalyzes the cleavage of (R)-citramalyl-CoA to yield acetyl-CoA and pyruvate.</text>
</comment>
<comment type="catalytic activity">
    <reaction evidence="3">
        <text>(3R)-citramalyl-CoA = pyruvate + acetyl-CoA</text>
        <dbReference type="Rhea" id="RHEA:38275"/>
        <dbReference type="ChEBI" id="CHEBI:15361"/>
        <dbReference type="ChEBI" id="CHEBI:57288"/>
        <dbReference type="ChEBI" id="CHEBI:75637"/>
        <dbReference type="EC" id="4.1.3.46"/>
    </reaction>
</comment>
<comment type="cofactor">
    <cofactor evidence="3">
        <name>Mn(2+)</name>
        <dbReference type="ChEBI" id="CHEBI:29035"/>
    </cofactor>
    <cofactor evidence="3">
        <name>Co(2+)</name>
        <dbReference type="ChEBI" id="CHEBI:48828"/>
    </cofactor>
    <cofactor evidence="3">
        <name>Ni(2+)</name>
        <dbReference type="ChEBI" id="CHEBI:49786"/>
    </cofactor>
    <cofactor evidence="3">
        <name>Mg(2+)</name>
        <dbReference type="ChEBI" id="CHEBI:18420"/>
    </cofactor>
    <text evidence="3">Divalent cations such as manganese, cobalt, nickel and magnesium.</text>
</comment>
<comment type="activity regulation">
    <text evidence="3">Activated by dithioerythritol (DTE) (in vitro).</text>
</comment>
<comment type="biophysicochemical properties">
    <absorption>
        <max evidence="3">280 nm</max>
    </absorption>
    <kinetics>
        <KM evidence="3">70 uM for (R)-citramalyl-CoA</KM>
        <text>kcat is 1.7 sec(-1) for lyase activity with (R)-citramalyl-CoA as substrate.</text>
    </kinetics>
    <phDependence>
        <text evidence="3">Optimum pH is 7 (at 55 degrees Celsius).</text>
    </phDependence>
    <temperatureDependence>
        <text evidence="3">Optimum temperature is 55 degrees Celsius.</text>
    </temperatureDependence>
</comment>
<comment type="subunit">
    <text evidence="3">Homodimer.</text>
</comment>
<comment type="induction">
    <text evidence="3">Under autotrophic growth conditions.</text>
</comment>
<comment type="similarity">
    <text evidence="4">Belongs to the HMG-CoA lyase family.</text>
</comment>
<gene>
    <name type="primary">ccl</name>
    <name type="ordered locus">Caur_2265</name>
</gene>
<dbReference type="EC" id="4.1.3.46"/>
<dbReference type="EMBL" id="CP000909">
    <property type="protein sequence ID" value="ABY35474.1"/>
    <property type="molecule type" value="Genomic_DNA"/>
</dbReference>
<dbReference type="RefSeq" id="WP_012258128.1">
    <property type="nucleotide sequence ID" value="NC_010175.1"/>
</dbReference>
<dbReference type="RefSeq" id="YP_001635863.1">
    <property type="nucleotide sequence ID" value="NC_010175.1"/>
</dbReference>
<dbReference type="SMR" id="A9WGE2"/>
<dbReference type="STRING" id="324602.Caur_2265"/>
<dbReference type="EnsemblBacteria" id="ABY35474">
    <property type="protein sequence ID" value="ABY35474"/>
    <property type="gene ID" value="Caur_2265"/>
</dbReference>
<dbReference type="KEGG" id="cau:Caur_2265"/>
<dbReference type="PATRIC" id="fig|324602.8.peg.2566"/>
<dbReference type="eggNOG" id="COG0119">
    <property type="taxonomic scope" value="Bacteria"/>
</dbReference>
<dbReference type="HOGENOM" id="CLU_022138_3_2_0"/>
<dbReference type="InParanoid" id="A9WGE2"/>
<dbReference type="Proteomes" id="UP000002008">
    <property type="component" value="Chromosome"/>
</dbReference>
<dbReference type="GO" id="GO:0044101">
    <property type="term" value="F:(3R)-citramalyl-CoA lyase activity"/>
    <property type="evidence" value="ECO:0007669"/>
    <property type="project" value="UniProtKB-EC"/>
</dbReference>
<dbReference type="GO" id="GO:0004419">
    <property type="term" value="F:hydroxymethylglutaryl-CoA lyase activity"/>
    <property type="evidence" value="ECO:0000318"/>
    <property type="project" value="GO_Central"/>
</dbReference>
<dbReference type="GO" id="GO:0046872">
    <property type="term" value="F:metal ion binding"/>
    <property type="evidence" value="ECO:0007669"/>
    <property type="project" value="UniProtKB-KW"/>
</dbReference>
<dbReference type="GO" id="GO:0016833">
    <property type="term" value="F:oxo-acid-lyase activity"/>
    <property type="evidence" value="ECO:0000314"/>
    <property type="project" value="UniProtKB"/>
</dbReference>
<dbReference type="GO" id="GO:0016740">
    <property type="term" value="F:transferase activity"/>
    <property type="evidence" value="ECO:0007669"/>
    <property type="project" value="UniProtKB-KW"/>
</dbReference>
<dbReference type="GO" id="GO:0043427">
    <property type="term" value="P:carbon fixation by 3-hydroxypropionate cycle"/>
    <property type="evidence" value="ECO:0000314"/>
    <property type="project" value="UniProtKB"/>
</dbReference>
<dbReference type="GO" id="GO:0009436">
    <property type="term" value="P:glyoxylate catabolic process"/>
    <property type="evidence" value="ECO:0000314"/>
    <property type="project" value="UniProtKB"/>
</dbReference>
<dbReference type="GO" id="GO:0046951">
    <property type="term" value="P:ketone body biosynthetic process"/>
    <property type="evidence" value="ECO:0000318"/>
    <property type="project" value="GO_Central"/>
</dbReference>
<dbReference type="GO" id="GO:0006552">
    <property type="term" value="P:L-leucine catabolic process"/>
    <property type="evidence" value="ECO:0000318"/>
    <property type="project" value="GO_Central"/>
</dbReference>
<dbReference type="CDD" id="cd07938">
    <property type="entry name" value="DRE_TIM_HMGL"/>
    <property type="match status" value="1"/>
</dbReference>
<dbReference type="FunFam" id="3.20.20.70:FF:000071">
    <property type="entry name" value="Hydroxymethylglutaryl-CoA lyase"/>
    <property type="match status" value="1"/>
</dbReference>
<dbReference type="Gene3D" id="3.20.20.70">
    <property type="entry name" value="Aldolase class I"/>
    <property type="match status" value="1"/>
</dbReference>
<dbReference type="InterPro" id="IPR013785">
    <property type="entry name" value="Aldolase_TIM"/>
</dbReference>
<dbReference type="InterPro" id="IPR043594">
    <property type="entry name" value="HMGL"/>
</dbReference>
<dbReference type="InterPro" id="IPR000891">
    <property type="entry name" value="PYR_CT"/>
</dbReference>
<dbReference type="NCBIfam" id="NF004283">
    <property type="entry name" value="PRK05692.1"/>
    <property type="match status" value="1"/>
</dbReference>
<dbReference type="PANTHER" id="PTHR42738">
    <property type="entry name" value="HYDROXYMETHYLGLUTARYL-COA LYASE"/>
    <property type="match status" value="1"/>
</dbReference>
<dbReference type="PANTHER" id="PTHR42738:SF7">
    <property type="entry name" value="HYDROXYMETHYLGLUTARYL-COA LYASE"/>
    <property type="match status" value="1"/>
</dbReference>
<dbReference type="Pfam" id="PF00682">
    <property type="entry name" value="HMGL-like"/>
    <property type="match status" value="1"/>
</dbReference>
<dbReference type="SUPFAM" id="SSF51569">
    <property type="entry name" value="Aldolase"/>
    <property type="match status" value="1"/>
</dbReference>
<dbReference type="PROSITE" id="PS50991">
    <property type="entry name" value="PYR_CT"/>
    <property type="match status" value="1"/>
</dbReference>
<name>CCL_CHLAA</name>
<proteinExistence type="evidence at protein level"/>
<organism>
    <name type="scientific">Chloroflexus aurantiacus (strain ATCC 29366 / DSM 635 / J-10-fl)</name>
    <dbReference type="NCBI Taxonomy" id="324602"/>
    <lineage>
        <taxon>Bacteria</taxon>
        <taxon>Bacillati</taxon>
        <taxon>Chloroflexota</taxon>
        <taxon>Chloroflexia</taxon>
        <taxon>Chloroflexales</taxon>
        <taxon>Chloroflexineae</taxon>
        <taxon>Chloroflexaceae</taxon>
        <taxon>Chloroflexus</taxon>
    </lineage>
</organism>
<accession>A9WGE2</accession>
<sequence>MEAVTIVDVAPRDGLQNEPDVLEPATRVELIERLLAAGVPRIEIGSFVNPRQVPQMAGIDQIARMLIERGHNLAARTTNDLFRFTALVPNQRGYELAAAAGLRHVRLVLAASDGLNRANFKRTTAESLIEFSRFALNIRRDGLTFGVAIGAAFGCPFDGYVSPERVRAIAEHAVDIGAGEIILADTTGMAVPTQVAALCRTILDRIPDVTVTLHLHNTRNTGYANAFAAWQVGIRSFDAALGGIGGCPFAPRAVGNIASEDLVHLFNGLGVPTGIDLSALIAASDWLSATLGRPLPALVGKAGPVYPQVVSMAPYLS</sequence>
<protein>
    <recommendedName>
        <fullName>(R)-citramalyl-CoA lyase</fullName>
        <ecNumber>4.1.3.46</ecNumber>
    </recommendedName>
</protein>
<reference key="1">
    <citation type="journal article" date="2011" name="BMC Genomics">
        <title>Complete genome sequence of the filamentous anoxygenic phototrophic bacterium Chloroflexus aurantiacus.</title>
        <authorList>
            <person name="Tang K.H."/>
            <person name="Barry K."/>
            <person name="Chertkov O."/>
            <person name="Dalin E."/>
            <person name="Han C.S."/>
            <person name="Hauser L.J."/>
            <person name="Honchak B.M."/>
            <person name="Karbach L.E."/>
            <person name="Land M.L."/>
            <person name="Lapidus A."/>
            <person name="Larimer F.W."/>
            <person name="Mikhailova N."/>
            <person name="Pitluck S."/>
            <person name="Pierson B.K."/>
            <person name="Blankenship R.E."/>
        </authorList>
    </citation>
    <scope>NUCLEOTIDE SEQUENCE [LARGE SCALE GENOMIC DNA]</scope>
    <source>
        <strain>ATCC 29366 / DSM 635 / J-10-fl</strain>
    </source>
</reference>
<reference key="2">
    <citation type="journal article" date="2007" name="J. Bacteriol.">
        <title>Properties of R-citramalyl-coenzyme A lyase and its role in the autotrophic 3-hydroxypropionate cycle of Chloroflexus aurantiacus.</title>
        <authorList>
            <person name="Friedmann S."/>
            <person name="Alber B.E."/>
            <person name="Fuchs G."/>
        </authorList>
    </citation>
    <scope>FUNCTION</scope>
    <scope>CATALYTIC ACTIVITY</scope>
    <scope>BIOPHYSICOCHEMICAL PROPERTIES</scope>
    <scope>ACTIVITY REGULATION</scope>
    <scope>INDUCTION</scope>
    <scope>COFACTOR</scope>
    <scope>SUBUNIT</scope>
    <source>
        <strain>DSM 636 / Ok-70-fl</strain>
    </source>
</reference>
<feature type="chain" id="PRO_0000429587" description="(R)-citramalyl-CoA lyase">
    <location>
        <begin position="1"/>
        <end position="317"/>
    </location>
</feature>
<feature type="domain" description="Pyruvate carboxyltransferase" evidence="2">
    <location>
        <begin position="4"/>
        <end position="281"/>
    </location>
</feature>
<feature type="active site" evidence="1">
    <location>
        <position position="247"/>
    </location>
</feature>
<feature type="binding site" evidence="1">
    <location>
        <position position="12"/>
    </location>
    <ligand>
        <name>substrate</name>
    </ligand>
</feature>
<feature type="binding site" evidence="1">
    <location>
        <position position="13"/>
    </location>
    <ligand>
        <name>a divalent metal cation</name>
        <dbReference type="ChEBI" id="CHEBI:60240"/>
    </ligand>
</feature>
<feature type="binding site" evidence="1">
    <location>
        <position position="214"/>
    </location>
    <ligand>
        <name>a divalent metal cation</name>
        <dbReference type="ChEBI" id="CHEBI:60240"/>
    </ligand>
</feature>
<feature type="binding site" evidence="1">
    <location>
        <position position="216"/>
    </location>
    <ligand>
        <name>a divalent metal cation</name>
        <dbReference type="ChEBI" id="CHEBI:60240"/>
    </ligand>
</feature>
<feature type="binding site" evidence="1">
    <location>
        <position position="256"/>
    </location>
    <ligand>
        <name>a divalent metal cation</name>
        <dbReference type="ChEBI" id="CHEBI:60240"/>
    </ligand>
</feature>
<keyword id="KW-0456">Lyase</keyword>
<keyword id="KW-0460">Magnesium</keyword>
<keyword id="KW-0479">Metal-binding</keyword>
<keyword id="KW-0670">Pyruvate</keyword>
<keyword id="KW-1185">Reference proteome</keyword>
<keyword id="KW-0808">Transferase</keyword>
<evidence type="ECO:0000250" key="1"/>
<evidence type="ECO:0000255" key="2">
    <source>
        <dbReference type="PROSITE-ProRule" id="PRU01151"/>
    </source>
</evidence>
<evidence type="ECO:0000269" key="3">
    <source>
    </source>
</evidence>
<evidence type="ECO:0000305" key="4"/>